<name>PNP_VIBVY</name>
<protein>
    <recommendedName>
        <fullName evidence="1">Polyribonucleotide nucleotidyltransferase</fullName>
        <ecNumber evidence="1">2.7.7.8</ecNumber>
    </recommendedName>
    <alternativeName>
        <fullName evidence="1">Polynucleotide phosphorylase</fullName>
        <shortName evidence="1">PNPase</shortName>
    </alternativeName>
</protein>
<organism>
    <name type="scientific">Vibrio vulnificus (strain YJ016)</name>
    <dbReference type="NCBI Taxonomy" id="196600"/>
    <lineage>
        <taxon>Bacteria</taxon>
        <taxon>Pseudomonadati</taxon>
        <taxon>Pseudomonadota</taxon>
        <taxon>Gammaproteobacteria</taxon>
        <taxon>Vibrionales</taxon>
        <taxon>Vibrionaceae</taxon>
        <taxon>Vibrio</taxon>
    </lineage>
</organism>
<dbReference type="EC" id="2.7.7.8" evidence="1"/>
<dbReference type="EMBL" id="BA000037">
    <property type="protein sequence ID" value="BAC95461.1"/>
    <property type="status" value="ALT_INIT"/>
    <property type="molecule type" value="Genomic_DNA"/>
</dbReference>
<dbReference type="RefSeq" id="WP_011079626.1">
    <property type="nucleotide sequence ID" value="NC_005139.1"/>
</dbReference>
<dbReference type="SMR" id="Q7MI20"/>
<dbReference type="STRING" id="672.VV93_v1c24170"/>
<dbReference type="GeneID" id="93895956"/>
<dbReference type="KEGG" id="vvy:VV2697"/>
<dbReference type="eggNOG" id="COG1185">
    <property type="taxonomic scope" value="Bacteria"/>
</dbReference>
<dbReference type="HOGENOM" id="CLU_004217_2_2_6"/>
<dbReference type="Proteomes" id="UP000002675">
    <property type="component" value="Chromosome I"/>
</dbReference>
<dbReference type="GO" id="GO:0005829">
    <property type="term" value="C:cytosol"/>
    <property type="evidence" value="ECO:0007669"/>
    <property type="project" value="TreeGrafter"/>
</dbReference>
<dbReference type="GO" id="GO:0000175">
    <property type="term" value="F:3'-5'-RNA exonuclease activity"/>
    <property type="evidence" value="ECO:0007669"/>
    <property type="project" value="TreeGrafter"/>
</dbReference>
<dbReference type="GO" id="GO:0000287">
    <property type="term" value="F:magnesium ion binding"/>
    <property type="evidence" value="ECO:0007669"/>
    <property type="project" value="UniProtKB-UniRule"/>
</dbReference>
<dbReference type="GO" id="GO:0004654">
    <property type="term" value="F:polyribonucleotide nucleotidyltransferase activity"/>
    <property type="evidence" value="ECO:0007669"/>
    <property type="project" value="UniProtKB-UniRule"/>
</dbReference>
<dbReference type="GO" id="GO:0003723">
    <property type="term" value="F:RNA binding"/>
    <property type="evidence" value="ECO:0007669"/>
    <property type="project" value="UniProtKB-UniRule"/>
</dbReference>
<dbReference type="GO" id="GO:0006402">
    <property type="term" value="P:mRNA catabolic process"/>
    <property type="evidence" value="ECO:0007669"/>
    <property type="project" value="UniProtKB-UniRule"/>
</dbReference>
<dbReference type="GO" id="GO:0006396">
    <property type="term" value="P:RNA processing"/>
    <property type="evidence" value="ECO:0007669"/>
    <property type="project" value="InterPro"/>
</dbReference>
<dbReference type="CDD" id="cd02393">
    <property type="entry name" value="KH-I_PNPase"/>
    <property type="match status" value="1"/>
</dbReference>
<dbReference type="CDD" id="cd11363">
    <property type="entry name" value="RNase_PH_PNPase_1"/>
    <property type="match status" value="1"/>
</dbReference>
<dbReference type="CDD" id="cd11364">
    <property type="entry name" value="RNase_PH_PNPase_2"/>
    <property type="match status" value="1"/>
</dbReference>
<dbReference type="CDD" id="cd04472">
    <property type="entry name" value="S1_PNPase"/>
    <property type="match status" value="1"/>
</dbReference>
<dbReference type="FunFam" id="2.40.50.140:FF:000023">
    <property type="entry name" value="Polyribonucleotide nucleotidyltransferase"/>
    <property type="match status" value="1"/>
</dbReference>
<dbReference type="FunFam" id="3.30.1370.10:FF:000001">
    <property type="entry name" value="Polyribonucleotide nucleotidyltransferase"/>
    <property type="match status" value="1"/>
</dbReference>
<dbReference type="FunFam" id="3.30.230.70:FF:000001">
    <property type="entry name" value="Polyribonucleotide nucleotidyltransferase"/>
    <property type="match status" value="1"/>
</dbReference>
<dbReference type="FunFam" id="3.30.230.70:FF:000002">
    <property type="entry name" value="Polyribonucleotide nucleotidyltransferase"/>
    <property type="match status" value="1"/>
</dbReference>
<dbReference type="Gene3D" id="3.30.230.70">
    <property type="entry name" value="GHMP Kinase, N-terminal domain"/>
    <property type="match status" value="2"/>
</dbReference>
<dbReference type="Gene3D" id="3.30.1370.10">
    <property type="entry name" value="K Homology domain, type 1"/>
    <property type="match status" value="1"/>
</dbReference>
<dbReference type="Gene3D" id="2.40.50.140">
    <property type="entry name" value="Nucleic acid-binding proteins"/>
    <property type="match status" value="1"/>
</dbReference>
<dbReference type="HAMAP" id="MF_01595">
    <property type="entry name" value="PNPase"/>
    <property type="match status" value="1"/>
</dbReference>
<dbReference type="InterPro" id="IPR001247">
    <property type="entry name" value="ExoRNase_PH_dom1"/>
</dbReference>
<dbReference type="InterPro" id="IPR015847">
    <property type="entry name" value="ExoRNase_PH_dom2"/>
</dbReference>
<dbReference type="InterPro" id="IPR036345">
    <property type="entry name" value="ExoRNase_PH_dom2_sf"/>
</dbReference>
<dbReference type="InterPro" id="IPR004087">
    <property type="entry name" value="KH_dom"/>
</dbReference>
<dbReference type="InterPro" id="IPR004088">
    <property type="entry name" value="KH_dom_type_1"/>
</dbReference>
<dbReference type="InterPro" id="IPR036612">
    <property type="entry name" value="KH_dom_type_1_sf"/>
</dbReference>
<dbReference type="InterPro" id="IPR012340">
    <property type="entry name" value="NA-bd_OB-fold"/>
</dbReference>
<dbReference type="InterPro" id="IPR012162">
    <property type="entry name" value="PNPase"/>
</dbReference>
<dbReference type="InterPro" id="IPR027408">
    <property type="entry name" value="PNPase/RNase_PH_dom_sf"/>
</dbReference>
<dbReference type="InterPro" id="IPR015848">
    <property type="entry name" value="PNPase_PH_RNA-bd_bac/org-type"/>
</dbReference>
<dbReference type="InterPro" id="IPR020568">
    <property type="entry name" value="Ribosomal_Su5_D2-typ_SF"/>
</dbReference>
<dbReference type="InterPro" id="IPR003029">
    <property type="entry name" value="S1_domain"/>
</dbReference>
<dbReference type="NCBIfam" id="TIGR03591">
    <property type="entry name" value="polynuc_phos"/>
    <property type="match status" value="1"/>
</dbReference>
<dbReference type="NCBIfam" id="NF008805">
    <property type="entry name" value="PRK11824.1"/>
    <property type="match status" value="1"/>
</dbReference>
<dbReference type="PANTHER" id="PTHR11252">
    <property type="entry name" value="POLYRIBONUCLEOTIDE NUCLEOTIDYLTRANSFERASE"/>
    <property type="match status" value="1"/>
</dbReference>
<dbReference type="PANTHER" id="PTHR11252:SF0">
    <property type="entry name" value="POLYRIBONUCLEOTIDE NUCLEOTIDYLTRANSFERASE 1, MITOCHONDRIAL"/>
    <property type="match status" value="1"/>
</dbReference>
<dbReference type="Pfam" id="PF00013">
    <property type="entry name" value="KH_1"/>
    <property type="match status" value="1"/>
</dbReference>
<dbReference type="Pfam" id="PF03726">
    <property type="entry name" value="PNPase"/>
    <property type="match status" value="1"/>
</dbReference>
<dbReference type="Pfam" id="PF01138">
    <property type="entry name" value="RNase_PH"/>
    <property type="match status" value="2"/>
</dbReference>
<dbReference type="Pfam" id="PF03725">
    <property type="entry name" value="RNase_PH_C"/>
    <property type="match status" value="2"/>
</dbReference>
<dbReference type="Pfam" id="PF00575">
    <property type="entry name" value="S1"/>
    <property type="match status" value="1"/>
</dbReference>
<dbReference type="PIRSF" id="PIRSF005499">
    <property type="entry name" value="PNPase"/>
    <property type="match status" value="1"/>
</dbReference>
<dbReference type="SMART" id="SM00322">
    <property type="entry name" value="KH"/>
    <property type="match status" value="1"/>
</dbReference>
<dbReference type="SMART" id="SM00316">
    <property type="entry name" value="S1"/>
    <property type="match status" value="1"/>
</dbReference>
<dbReference type="SUPFAM" id="SSF54791">
    <property type="entry name" value="Eukaryotic type KH-domain (KH-domain type I)"/>
    <property type="match status" value="1"/>
</dbReference>
<dbReference type="SUPFAM" id="SSF50249">
    <property type="entry name" value="Nucleic acid-binding proteins"/>
    <property type="match status" value="1"/>
</dbReference>
<dbReference type="SUPFAM" id="SSF55666">
    <property type="entry name" value="Ribonuclease PH domain 2-like"/>
    <property type="match status" value="2"/>
</dbReference>
<dbReference type="SUPFAM" id="SSF54211">
    <property type="entry name" value="Ribosomal protein S5 domain 2-like"/>
    <property type="match status" value="2"/>
</dbReference>
<dbReference type="PROSITE" id="PS50084">
    <property type="entry name" value="KH_TYPE_1"/>
    <property type="match status" value="1"/>
</dbReference>
<dbReference type="PROSITE" id="PS50126">
    <property type="entry name" value="S1"/>
    <property type="match status" value="1"/>
</dbReference>
<gene>
    <name evidence="1" type="primary">pnp</name>
    <name type="ordered locus">VV2697</name>
</gene>
<reference key="1">
    <citation type="journal article" date="2003" name="Genome Res.">
        <title>Comparative genome analysis of Vibrio vulnificus, a marine pathogen.</title>
        <authorList>
            <person name="Chen C.-Y."/>
            <person name="Wu K.-M."/>
            <person name="Chang Y.-C."/>
            <person name="Chang C.-H."/>
            <person name="Tsai H.-C."/>
            <person name="Liao T.-L."/>
            <person name="Liu Y.-M."/>
            <person name="Chen H.-J."/>
            <person name="Shen A.B.-T."/>
            <person name="Li J.-C."/>
            <person name="Su T.-L."/>
            <person name="Shao C.-P."/>
            <person name="Lee C.-T."/>
            <person name="Hor L.-I."/>
            <person name="Tsai S.-F."/>
        </authorList>
    </citation>
    <scope>NUCLEOTIDE SEQUENCE [LARGE SCALE GENOMIC DNA]</scope>
    <source>
        <strain>YJ016</strain>
    </source>
</reference>
<proteinExistence type="inferred from homology"/>
<accession>Q7MI20</accession>
<feature type="chain" id="PRO_0000329933" description="Polyribonucleotide nucleotidyltransferase">
    <location>
        <begin position="1"/>
        <end position="708"/>
    </location>
</feature>
<feature type="domain" description="KH" evidence="1">
    <location>
        <begin position="554"/>
        <end position="613"/>
    </location>
</feature>
<feature type="domain" description="S1 motif" evidence="1">
    <location>
        <begin position="623"/>
        <end position="691"/>
    </location>
</feature>
<feature type="binding site" evidence="1">
    <location>
        <position position="487"/>
    </location>
    <ligand>
        <name>Mg(2+)</name>
        <dbReference type="ChEBI" id="CHEBI:18420"/>
    </ligand>
</feature>
<feature type="binding site" evidence="1">
    <location>
        <position position="493"/>
    </location>
    <ligand>
        <name>Mg(2+)</name>
        <dbReference type="ChEBI" id="CHEBI:18420"/>
    </ligand>
</feature>
<keyword id="KW-0963">Cytoplasm</keyword>
<keyword id="KW-0460">Magnesium</keyword>
<keyword id="KW-0479">Metal-binding</keyword>
<keyword id="KW-0548">Nucleotidyltransferase</keyword>
<keyword id="KW-0694">RNA-binding</keyword>
<keyword id="KW-0808">Transferase</keyword>
<evidence type="ECO:0000255" key="1">
    <source>
        <dbReference type="HAMAP-Rule" id="MF_01595"/>
    </source>
</evidence>
<evidence type="ECO:0000305" key="2"/>
<sequence>MFEKPVVKTFQYGNHTVTLETGVIARQATAAVMVTMDDTAVFVSVVGKKEAVPGQDFFPLTVNYQERTYAAGKIPGGFFKREGRPSEGETLTARLIDRPIRPLFPEGFNNEVQVIATVVSVNPDVQPDIPTMIGTSAALAISGIPFNGPIGAARVGHIDGQLVLNPSNTELNASRLDLVVAGTESAVLMVESEADNLTEEEMLSAVVFGHDQQQAVIKAINEFAAEVATPSWNWVAPEANTALNEKVADLAEAKLVEAYKITEKMARYDRIHEIAAEVNAVILAEDPEADAKEIHTIFHDLEKTVVRRSIIAGNPRIDGREKDMVRALDVRTGVLPRTHGSSLFTRGETQALVTATLGTQRDAQIIDELTGEKKDYFLLHYNFPPYCVGETGFVGSPKRREIGHGKLAKRGIAAVMPSIDEFPYTVRVVSEITESNGSSSMASVCGTSLALMDAGVPIKASVAGIAMGLVKEGDDFVVLSDILGDEDHLGDMDFKVAGTSTGITALQMDIKIEGITKEIMQIALNQAQGARKHILSVMDQAISGARDDISEFAPRIHTMKISADKIKDVIGKGGAVIRALTEETGTTIEIEDDGTIKIAATEGAAAKEAIRRIQEITAEVEVGVIYTGKVARLADFGAFVTILPGKDGLVHISQIADKRVEKVSDYLTEGQEVQVKVLEIDRQGRVRLSMKEAVEKPVEAEAPAAEEE</sequence>
<comment type="function">
    <text evidence="1">Involved in mRNA degradation. Catalyzes the phosphorolysis of single-stranded polyribonucleotides processively in the 3'- to 5'-direction.</text>
</comment>
<comment type="catalytic activity">
    <reaction evidence="1">
        <text>RNA(n+1) + phosphate = RNA(n) + a ribonucleoside 5'-diphosphate</text>
        <dbReference type="Rhea" id="RHEA:22096"/>
        <dbReference type="Rhea" id="RHEA-COMP:14527"/>
        <dbReference type="Rhea" id="RHEA-COMP:17342"/>
        <dbReference type="ChEBI" id="CHEBI:43474"/>
        <dbReference type="ChEBI" id="CHEBI:57930"/>
        <dbReference type="ChEBI" id="CHEBI:140395"/>
        <dbReference type="EC" id="2.7.7.8"/>
    </reaction>
</comment>
<comment type="cofactor">
    <cofactor evidence="1">
        <name>Mg(2+)</name>
        <dbReference type="ChEBI" id="CHEBI:18420"/>
    </cofactor>
</comment>
<comment type="subunit">
    <text evidence="1">Component of the RNA degradosome, which is a multiprotein complex involved in RNA processing and mRNA degradation.</text>
</comment>
<comment type="subcellular location">
    <subcellularLocation>
        <location evidence="1">Cytoplasm</location>
    </subcellularLocation>
</comment>
<comment type="similarity">
    <text evidence="1">Belongs to the polyribonucleotide nucleotidyltransferase family.</text>
</comment>
<comment type="sequence caution" evidence="2">
    <conflict type="erroneous initiation">
        <sequence resource="EMBL-CDS" id="BAC95461"/>
    </conflict>
</comment>